<reference key="1">
    <citation type="journal article" date="2003" name="Nature">
        <title>The genome of a motile marine Synechococcus.</title>
        <authorList>
            <person name="Palenik B."/>
            <person name="Brahamsha B."/>
            <person name="Larimer F.W."/>
            <person name="Land M.L."/>
            <person name="Hauser L."/>
            <person name="Chain P."/>
            <person name="Lamerdin J.E."/>
            <person name="Regala W."/>
            <person name="Allen E.E."/>
            <person name="McCarren J."/>
            <person name="Paulsen I.T."/>
            <person name="Dufresne A."/>
            <person name="Partensky F."/>
            <person name="Webb E.A."/>
            <person name="Waterbury J."/>
        </authorList>
    </citation>
    <scope>NUCLEOTIDE SEQUENCE [LARGE SCALE GENOMIC DNA]</scope>
    <source>
        <strain>WH8102</strain>
    </source>
</reference>
<sequence length="465" mass="51367">MPETNGTEADSSGPRPGLRLELQAIDLDRDGHGLARWQGWVVVVPGLLPGERAKVQLQQRQKSRWLSRISERLDSSPTRRRPPCILAQDCGGCTLQHLEESAQRNWKQNQLHQTMLRLGGIDHPQAPALTDQRGLGYRNRGLIPLRRGEDDRLRMGYFRRGSHRIVNLSRCPVLDPRLDALVEPLKQDLDTSGLSADHDLSHSQGLRHLGLRIGHHTGEVLITVVSSQQLPALQRLAQQWIERWDPVKGVTLNLQPRRTNQILGATTTVLAGAPTIRELFCGLQLQLSTTTFFQINTPQAERIVACIVSWLSQAELAGPIVDAYCGIGTISLPLAAQGHHVVGLEINPDSIDQARSNADANGLGARTEFQAGDVANLLKETLATCSALVVDPPRRGLESSVIEAILSDPPGLLAYLSCDMATQARDLKRLLQPEGPYRLEQLQPVDFFPQTTHLENLAFLRRVSS</sequence>
<accession>Q7U6V8</accession>
<name>Y1228_PARMW</name>
<protein>
    <recommendedName>
        <fullName>Uncharacterized RNA methyltransferase SYNW1228</fullName>
        <ecNumber>2.1.1.-</ecNumber>
    </recommendedName>
</protein>
<evidence type="ECO:0000250" key="1"/>
<evidence type="ECO:0000255" key="2">
    <source>
        <dbReference type="PROSITE-ProRule" id="PRU00208"/>
    </source>
</evidence>
<evidence type="ECO:0000255" key="3">
    <source>
        <dbReference type="PROSITE-ProRule" id="PRU01024"/>
    </source>
</evidence>
<feature type="chain" id="PRO_0000162044" description="Uncharacterized RNA methyltransferase SYNW1228">
    <location>
        <begin position="1"/>
        <end position="465"/>
    </location>
</feature>
<feature type="domain" description="TRAM" evidence="2">
    <location>
        <begin position="13"/>
        <end position="71"/>
    </location>
</feature>
<feature type="active site" description="Nucleophile" evidence="3">
    <location>
        <position position="418"/>
    </location>
</feature>
<feature type="binding site" evidence="1">
    <location>
        <position position="84"/>
    </location>
    <ligand>
        <name>[4Fe-4S] cluster</name>
        <dbReference type="ChEBI" id="CHEBI:49883"/>
    </ligand>
</feature>
<feature type="binding site" evidence="1">
    <location>
        <position position="90"/>
    </location>
    <ligand>
        <name>[4Fe-4S] cluster</name>
        <dbReference type="ChEBI" id="CHEBI:49883"/>
    </ligand>
</feature>
<feature type="binding site" evidence="1">
    <location>
        <position position="93"/>
    </location>
    <ligand>
        <name>[4Fe-4S] cluster</name>
        <dbReference type="ChEBI" id="CHEBI:49883"/>
    </ligand>
</feature>
<feature type="binding site" evidence="1">
    <location>
        <position position="171"/>
    </location>
    <ligand>
        <name>[4Fe-4S] cluster</name>
        <dbReference type="ChEBI" id="CHEBI:49883"/>
    </ligand>
</feature>
<feature type="binding site" evidence="3">
    <location>
        <position position="294"/>
    </location>
    <ligand>
        <name>S-adenosyl-L-methionine</name>
        <dbReference type="ChEBI" id="CHEBI:59789"/>
    </ligand>
</feature>
<feature type="binding site" evidence="3">
    <location>
        <position position="324"/>
    </location>
    <ligand>
        <name>S-adenosyl-L-methionine</name>
        <dbReference type="ChEBI" id="CHEBI:59789"/>
    </ligand>
</feature>
<feature type="binding site" evidence="3">
    <location>
        <position position="345"/>
    </location>
    <ligand>
        <name>S-adenosyl-L-methionine</name>
        <dbReference type="ChEBI" id="CHEBI:59789"/>
    </ligand>
</feature>
<feature type="binding site" evidence="3">
    <location>
        <position position="391"/>
    </location>
    <ligand>
        <name>S-adenosyl-L-methionine</name>
        <dbReference type="ChEBI" id="CHEBI:59789"/>
    </ligand>
</feature>
<organism>
    <name type="scientific">Parasynechococcus marenigrum (strain WH8102)</name>
    <dbReference type="NCBI Taxonomy" id="84588"/>
    <lineage>
        <taxon>Bacteria</taxon>
        <taxon>Bacillati</taxon>
        <taxon>Cyanobacteriota</taxon>
        <taxon>Cyanophyceae</taxon>
        <taxon>Synechococcales</taxon>
        <taxon>Prochlorococcaceae</taxon>
        <taxon>Parasynechococcus</taxon>
        <taxon>Parasynechococcus marenigrum</taxon>
    </lineage>
</organism>
<proteinExistence type="inferred from homology"/>
<comment type="similarity">
    <text evidence="3">Belongs to the class I-like SAM-binding methyltransferase superfamily. RNA M5U methyltransferase family.</text>
</comment>
<gene>
    <name type="ordered locus">SYNW1228</name>
</gene>
<dbReference type="EC" id="2.1.1.-"/>
<dbReference type="EMBL" id="BX569692">
    <property type="protein sequence ID" value="CAE07743.1"/>
    <property type="molecule type" value="Genomic_DNA"/>
</dbReference>
<dbReference type="RefSeq" id="WP_011128092.1">
    <property type="nucleotide sequence ID" value="NC_005070.1"/>
</dbReference>
<dbReference type="SMR" id="Q7U6V8"/>
<dbReference type="STRING" id="84588.SYNW1228"/>
<dbReference type="KEGG" id="syw:SYNW1228"/>
<dbReference type="eggNOG" id="COG2265">
    <property type="taxonomic scope" value="Bacteria"/>
</dbReference>
<dbReference type="HOGENOM" id="CLU_014689_7_0_3"/>
<dbReference type="Proteomes" id="UP000001422">
    <property type="component" value="Chromosome"/>
</dbReference>
<dbReference type="GO" id="GO:0051539">
    <property type="term" value="F:4 iron, 4 sulfur cluster binding"/>
    <property type="evidence" value="ECO:0007669"/>
    <property type="project" value="UniProtKB-KW"/>
</dbReference>
<dbReference type="GO" id="GO:0046872">
    <property type="term" value="F:metal ion binding"/>
    <property type="evidence" value="ECO:0007669"/>
    <property type="project" value="UniProtKB-KW"/>
</dbReference>
<dbReference type="GO" id="GO:0070041">
    <property type="term" value="F:rRNA (uridine-C5-)-methyltransferase activity"/>
    <property type="evidence" value="ECO:0007669"/>
    <property type="project" value="TreeGrafter"/>
</dbReference>
<dbReference type="GO" id="GO:0070475">
    <property type="term" value="P:rRNA base methylation"/>
    <property type="evidence" value="ECO:0007669"/>
    <property type="project" value="TreeGrafter"/>
</dbReference>
<dbReference type="CDD" id="cd02440">
    <property type="entry name" value="AdoMet_MTases"/>
    <property type="match status" value="1"/>
</dbReference>
<dbReference type="Gene3D" id="2.40.50.1070">
    <property type="match status" value="1"/>
</dbReference>
<dbReference type="Gene3D" id="2.40.50.140">
    <property type="entry name" value="Nucleic acid-binding proteins"/>
    <property type="match status" value="1"/>
</dbReference>
<dbReference type="Gene3D" id="3.40.50.150">
    <property type="entry name" value="Vaccinia Virus protein VP39"/>
    <property type="match status" value="1"/>
</dbReference>
<dbReference type="InterPro" id="IPR025714">
    <property type="entry name" value="Methyltranfer_dom"/>
</dbReference>
<dbReference type="InterPro" id="IPR030390">
    <property type="entry name" value="MeTrfase_TrmA_AS"/>
</dbReference>
<dbReference type="InterPro" id="IPR030391">
    <property type="entry name" value="MeTrfase_TrmA_CS"/>
</dbReference>
<dbReference type="InterPro" id="IPR012340">
    <property type="entry name" value="NA-bd_OB-fold"/>
</dbReference>
<dbReference type="InterPro" id="IPR029063">
    <property type="entry name" value="SAM-dependent_MTases_sf"/>
</dbReference>
<dbReference type="InterPro" id="IPR002792">
    <property type="entry name" value="TRAM_dom"/>
</dbReference>
<dbReference type="InterPro" id="IPR010280">
    <property type="entry name" value="U5_MeTrfase_fam"/>
</dbReference>
<dbReference type="NCBIfam" id="TIGR00479">
    <property type="entry name" value="rumA"/>
    <property type="match status" value="1"/>
</dbReference>
<dbReference type="PANTHER" id="PTHR11061">
    <property type="entry name" value="RNA M5U METHYLTRANSFERASE"/>
    <property type="match status" value="1"/>
</dbReference>
<dbReference type="PANTHER" id="PTHR11061:SF30">
    <property type="entry name" value="TRNA (URACIL(54)-C(5))-METHYLTRANSFERASE"/>
    <property type="match status" value="1"/>
</dbReference>
<dbReference type="Pfam" id="PF13847">
    <property type="entry name" value="Methyltransf_31"/>
    <property type="match status" value="1"/>
</dbReference>
<dbReference type="SUPFAM" id="SSF50249">
    <property type="entry name" value="Nucleic acid-binding proteins"/>
    <property type="match status" value="1"/>
</dbReference>
<dbReference type="SUPFAM" id="SSF53335">
    <property type="entry name" value="S-adenosyl-L-methionine-dependent methyltransferases"/>
    <property type="match status" value="1"/>
</dbReference>
<dbReference type="PROSITE" id="PS51687">
    <property type="entry name" value="SAM_MT_RNA_M5U"/>
    <property type="match status" value="1"/>
</dbReference>
<dbReference type="PROSITE" id="PS50926">
    <property type="entry name" value="TRAM"/>
    <property type="match status" value="1"/>
</dbReference>
<dbReference type="PROSITE" id="PS01230">
    <property type="entry name" value="TRMA_1"/>
    <property type="match status" value="1"/>
</dbReference>
<dbReference type="PROSITE" id="PS01231">
    <property type="entry name" value="TRMA_2"/>
    <property type="match status" value="1"/>
</dbReference>
<keyword id="KW-0004">4Fe-4S</keyword>
<keyword id="KW-0408">Iron</keyword>
<keyword id="KW-0411">Iron-sulfur</keyword>
<keyword id="KW-0479">Metal-binding</keyword>
<keyword id="KW-0489">Methyltransferase</keyword>
<keyword id="KW-0949">S-adenosyl-L-methionine</keyword>
<keyword id="KW-0808">Transferase</keyword>